<gene>
    <name type="primary">mib1</name>
</gene>
<evidence type="ECO:0000250" key="1"/>
<evidence type="ECO:0000255" key="2"/>
<evidence type="ECO:0000255" key="3">
    <source>
        <dbReference type="PROSITE-ProRule" id="PRU00175"/>
    </source>
</evidence>
<evidence type="ECO:0000255" key="4">
    <source>
        <dbReference type="PROSITE-ProRule" id="PRU00228"/>
    </source>
</evidence>
<evidence type="ECO:0000255" key="5">
    <source>
        <dbReference type="PROSITE-ProRule" id="PRU00749"/>
    </source>
</evidence>
<evidence type="ECO:0000305" key="6"/>
<comment type="function">
    <text evidence="1">E3 ubiquitin-protein ligase that mediates ubiquitination of Delta receptors, which act as ligands of Notch proteins. Positively regulates the Delta-mediated Notch signaling by ubiquitinating the intracellular domain of Delta, leading to endocytosis of Delta receptors (By similarity).</text>
</comment>
<comment type="catalytic activity">
    <reaction>
        <text>S-ubiquitinyl-[E2 ubiquitin-conjugating enzyme]-L-cysteine + [acceptor protein]-L-lysine = [E2 ubiquitin-conjugating enzyme]-L-cysteine + N(6)-ubiquitinyl-[acceptor protein]-L-lysine.</text>
        <dbReference type="EC" id="2.3.2.27"/>
    </reaction>
</comment>
<comment type="pathway">
    <text>Protein modification; protein ubiquitination.</text>
</comment>
<comment type="subcellular location">
    <subcellularLocation>
        <location evidence="1">Cytoplasm</location>
        <location evidence="1">Cytoskeleton</location>
        <location evidence="1">Microtubule organizing center</location>
        <location evidence="1">Centrosome</location>
        <location evidence="1">Centriolar satellite</location>
    </subcellularLocation>
    <subcellularLocation>
        <location evidence="1">Cytoplasm</location>
    </subcellularLocation>
</comment>
<reference key="1">
    <citation type="submission" date="2004-10" db="EMBL/GenBank/DDBJ databases">
        <authorList>
            <consortium name="NIH - Xenopus Gene Collection (XGC) project"/>
        </authorList>
    </citation>
    <scope>NUCLEOTIDE SEQUENCE [LARGE SCALE MRNA]</scope>
    <source>
        <tissue>Spleen</tissue>
    </source>
</reference>
<dbReference type="EC" id="2.3.2.27"/>
<dbReference type="EMBL" id="BC073370">
    <property type="protein sequence ID" value="AAH73370.1"/>
    <property type="molecule type" value="mRNA"/>
</dbReference>
<dbReference type="RefSeq" id="NP_001085805.1">
    <property type="nucleotide sequence ID" value="NM_001092336.1"/>
</dbReference>
<dbReference type="SMR" id="Q6GNY1"/>
<dbReference type="BioGRID" id="102395">
    <property type="interactions" value="1"/>
</dbReference>
<dbReference type="DNASU" id="444232"/>
<dbReference type="GeneID" id="444232"/>
<dbReference type="KEGG" id="xla:444232"/>
<dbReference type="AGR" id="Xenbase:XB-GENE-1001398"/>
<dbReference type="CTD" id="444232"/>
<dbReference type="Xenbase" id="XB-GENE-1001398">
    <property type="gene designation" value="mib1.L"/>
</dbReference>
<dbReference type="OMA" id="FFKPCGH"/>
<dbReference type="OrthoDB" id="2122982at2759"/>
<dbReference type="UniPathway" id="UPA00143"/>
<dbReference type="Proteomes" id="UP000186698">
    <property type="component" value="Chromosome 6L"/>
</dbReference>
<dbReference type="Bgee" id="444232">
    <property type="expression patterns" value="Expressed in internal ear and 19 other cell types or tissues"/>
</dbReference>
<dbReference type="GO" id="GO:0034451">
    <property type="term" value="C:centriolar satellite"/>
    <property type="evidence" value="ECO:0007669"/>
    <property type="project" value="UniProtKB-SubCell"/>
</dbReference>
<dbReference type="GO" id="GO:0005737">
    <property type="term" value="C:cytoplasm"/>
    <property type="evidence" value="ECO:0000318"/>
    <property type="project" value="GO_Central"/>
</dbReference>
<dbReference type="GO" id="GO:0061630">
    <property type="term" value="F:ubiquitin protein ligase activity"/>
    <property type="evidence" value="ECO:0000318"/>
    <property type="project" value="GO_Central"/>
</dbReference>
<dbReference type="GO" id="GO:0008270">
    <property type="term" value="F:zinc ion binding"/>
    <property type="evidence" value="ECO:0007669"/>
    <property type="project" value="UniProtKB-KW"/>
</dbReference>
<dbReference type="GO" id="GO:0006897">
    <property type="term" value="P:endocytosis"/>
    <property type="evidence" value="ECO:0000318"/>
    <property type="project" value="GO_Central"/>
</dbReference>
<dbReference type="GO" id="GO:0007219">
    <property type="term" value="P:Notch signaling pathway"/>
    <property type="evidence" value="ECO:0000318"/>
    <property type="project" value="GO_Central"/>
</dbReference>
<dbReference type="GO" id="GO:0016567">
    <property type="term" value="P:protein ubiquitination"/>
    <property type="evidence" value="ECO:0000318"/>
    <property type="project" value="GO_Central"/>
</dbReference>
<dbReference type="CDD" id="cd16724">
    <property type="entry name" value="RING-HC_MIB1_rpt1"/>
    <property type="match status" value="1"/>
</dbReference>
<dbReference type="CDD" id="cd16725">
    <property type="entry name" value="RING-HC_MIB1_rpt2"/>
    <property type="match status" value="1"/>
</dbReference>
<dbReference type="CDD" id="cd16727">
    <property type="entry name" value="RING-HC_MIB1_rpt3"/>
    <property type="match status" value="1"/>
</dbReference>
<dbReference type="CDD" id="cd02339">
    <property type="entry name" value="ZZ_Mind_bomb"/>
    <property type="match status" value="1"/>
</dbReference>
<dbReference type="FunFam" id="1.25.40.20:FF:000059">
    <property type="entry name" value="E3 ubiquitin-protein ligase MIB1 isoform X1"/>
    <property type="match status" value="1"/>
</dbReference>
<dbReference type="FunFam" id="1.25.40.20:FF:000191">
    <property type="entry name" value="E3 ubiquitin-protein ligase MIB1 isoform X1"/>
    <property type="match status" value="1"/>
</dbReference>
<dbReference type="FunFam" id="2.30.30.40:FF:000090">
    <property type="entry name" value="E3 ubiquitin-protein ligase MIB1 isoform X1"/>
    <property type="match status" value="1"/>
</dbReference>
<dbReference type="FunFam" id="3.30.40.10:FF:000083">
    <property type="entry name" value="E3 ubiquitin-protein ligase MIB1 isoform X1"/>
    <property type="match status" value="1"/>
</dbReference>
<dbReference type="FunFam" id="3.30.40.10:FF:000085">
    <property type="entry name" value="E3 ubiquitin-protein ligase MIB1 isoform X1"/>
    <property type="match status" value="1"/>
</dbReference>
<dbReference type="FunFam" id="3.30.40.10:FF:000135">
    <property type="entry name" value="E3 ubiquitin-protein ligase mib1 isoform X1"/>
    <property type="match status" value="1"/>
</dbReference>
<dbReference type="FunFam" id="3.30.60.90:FF:000005">
    <property type="entry name" value="Putative E3 ubiquitin-protein ligase mib1"/>
    <property type="match status" value="1"/>
</dbReference>
<dbReference type="FunFam" id="2.30.30.40:FF:000054">
    <property type="entry name" value="Putative e3 ubiquitin-protein ligase mind-bomb"/>
    <property type="match status" value="1"/>
</dbReference>
<dbReference type="Gene3D" id="3.30.60.90">
    <property type="match status" value="1"/>
</dbReference>
<dbReference type="Gene3D" id="1.25.40.20">
    <property type="entry name" value="Ankyrin repeat-containing domain"/>
    <property type="match status" value="3"/>
</dbReference>
<dbReference type="Gene3D" id="2.30.30.40">
    <property type="entry name" value="SH3 Domains"/>
    <property type="match status" value="2"/>
</dbReference>
<dbReference type="Gene3D" id="3.30.40.10">
    <property type="entry name" value="Zinc/RING finger domain, C3HC4 (zinc finger)"/>
    <property type="match status" value="3"/>
</dbReference>
<dbReference type="InterPro" id="IPR002110">
    <property type="entry name" value="Ankyrin_rpt"/>
</dbReference>
<dbReference type="InterPro" id="IPR036770">
    <property type="entry name" value="Ankyrin_rpt-contain_sf"/>
</dbReference>
<dbReference type="InterPro" id="IPR042056">
    <property type="entry name" value="MIB1/2_ZZ"/>
</dbReference>
<dbReference type="InterPro" id="IPR010606">
    <property type="entry name" value="Mib_Herc2"/>
</dbReference>
<dbReference type="InterPro" id="IPR037252">
    <property type="entry name" value="Mib_Herc2_sf"/>
</dbReference>
<dbReference type="InterPro" id="IPR040847">
    <property type="entry name" value="SH3_15"/>
</dbReference>
<dbReference type="InterPro" id="IPR001841">
    <property type="entry name" value="Znf_RING"/>
</dbReference>
<dbReference type="InterPro" id="IPR013083">
    <property type="entry name" value="Znf_RING/FYVE/PHD"/>
</dbReference>
<dbReference type="InterPro" id="IPR000433">
    <property type="entry name" value="Znf_ZZ"/>
</dbReference>
<dbReference type="InterPro" id="IPR043145">
    <property type="entry name" value="Znf_ZZ_sf"/>
</dbReference>
<dbReference type="PANTHER" id="PTHR24202:SF53">
    <property type="entry name" value="E3 UBIQUITIN-PROTEIN LIGASE MIB1"/>
    <property type="match status" value="1"/>
</dbReference>
<dbReference type="PANTHER" id="PTHR24202">
    <property type="entry name" value="E3 UBIQUITIN-PROTEIN LIGASE MIB2"/>
    <property type="match status" value="1"/>
</dbReference>
<dbReference type="Pfam" id="PF00023">
    <property type="entry name" value="Ank"/>
    <property type="match status" value="1"/>
</dbReference>
<dbReference type="Pfam" id="PF12796">
    <property type="entry name" value="Ank_2"/>
    <property type="match status" value="2"/>
</dbReference>
<dbReference type="Pfam" id="PF06701">
    <property type="entry name" value="MIB_HERC2"/>
    <property type="match status" value="2"/>
</dbReference>
<dbReference type="Pfam" id="PF18346">
    <property type="entry name" value="SH3_15"/>
    <property type="match status" value="2"/>
</dbReference>
<dbReference type="Pfam" id="PF13920">
    <property type="entry name" value="zf-C3HC4_3"/>
    <property type="match status" value="3"/>
</dbReference>
<dbReference type="Pfam" id="PF00569">
    <property type="entry name" value="ZZ"/>
    <property type="match status" value="1"/>
</dbReference>
<dbReference type="PRINTS" id="PR01415">
    <property type="entry name" value="ANKYRIN"/>
</dbReference>
<dbReference type="SMART" id="SM00248">
    <property type="entry name" value="ANK"/>
    <property type="match status" value="9"/>
</dbReference>
<dbReference type="SMART" id="SM00184">
    <property type="entry name" value="RING"/>
    <property type="match status" value="3"/>
</dbReference>
<dbReference type="SMART" id="SM00291">
    <property type="entry name" value="ZnF_ZZ"/>
    <property type="match status" value="1"/>
</dbReference>
<dbReference type="SUPFAM" id="SSF48403">
    <property type="entry name" value="Ankyrin repeat"/>
    <property type="match status" value="1"/>
</dbReference>
<dbReference type="SUPFAM" id="SSF159034">
    <property type="entry name" value="Mib/herc2 domain-like"/>
    <property type="match status" value="2"/>
</dbReference>
<dbReference type="SUPFAM" id="SSF57850">
    <property type="entry name" value="RING/U-box"/>
    <property type="match status" value="2"/>
</dbReference>
<dbReference type="PROSITE" id="PS50297">
    <property type="entry name" value="ANK_REP_REGION"/>
    <property type="match status" value="1"/>
</dbReference>
<dbReference type="PROSITE" id="PS50088">
    <property type="entry name" value="ANK_REPEAT"/>
    <property type="match status" value="6"/>
</dbReference>
<dbReference type="PROSITE" id="PS51416">
    <property type="entry name" value="MIB_HERC2"/>
    <property type="match status" value="2"/>
</dbReference>
<dbReference type="PROSITE" id="PS50089">
    <property type="entry name" value="ZF_RING_2"/>
    <property type="match status" value="3"/>
</dbReference>
<dbReference type="PROSITE" id="PS01357">
    <property type="entry name" value="ZF_ZZ_1"/>
    <property type="match status" value="1"/>
</dbReference>
<dbReference type="PROSITE" id="PS50135">
    <property type="entry name" value="ZF_ZZ_2"/>
    <property type="match status" value="1"/>
</dbReference>
<sequence length="1011" mass="110689">MSGSRNNRVMVEGVGARVARGPDWKWGKQDGGEGHVGTVRSFESPEEVVVVWDNGTAANYRCSGAYDLRIMDSAPTGIKHDGTMCDTCRQQPIIGIRWKCAECTNYDLCTVCYHGDKHHLRHRFYRITTPGSERVLLESRRKSKKITARGIFAGARVVRGVDWQWEDQDGGNGRRGKVTEIQDWSASSPHSAAYVLWDNGAKNLYRVGFEGMSDLKCVQDAKGGSFYRDHCPVLGEQNGNRNPGGLLIGDLVNIDLELEIVQSLQHGHGGWTDGMFETLTTTGTVCGIDEDHDIVVQYPSGNRWTFNPAVLTKANVVRSGDAAQGAEGGTSPFQVGDLVQICYDIERIKLLQRGHGEWAEAMLPTLGKVGRVQQIYSDNDLKVEVCGTSWTYNPAAVSRVASVGSAISNATGERLSQLLKKLFETQESGDLNEELVKAAANGDVAKVDDLLKRQDVDVNGQCAGHTAMQAASQNGHVDILKLLLKHSVDVEAEDKDGDRAVHHAAFGDEGTVIEVLQRGGADLNARNKRRQTPLHIAVNKGHLQVVKKLLDFSCHPSLQDSEGDTPLHDAISKKRDDILAVLLEAGADVTITNNNGFNALHHAALRGNPSAMRVLLSKLPRPWIVDEKKDDGYTALHLAALNNHVEVAELLVHQGSANLDIQNVNQQTALHLAVERQHTQIVRLLVRAEAKLDIQDKDGDTPLHEALRHHTLSQLRQLQDMQDVGKVDTTTWEPSKNTLIMGLGTQGAEKKSAASIACFLAANGADLAVRNKKGQSPLDLCPDPNLCKTLAKCHKEKSSGQVGSHSPSMINNDSETLEECMVCSDLKRDTLFGPCGHIATCSLCSPRVKKCLLCKEQVQSRTKIEECVVCSDKKAAVLFQPCGHMCACENCASLMKKCVQCRAVVERRVPFVMCCSGKGTEDVADDIAGGNIPALQKDKDNTNVNADVQKLQQQLQDIKEQTMCPVCLDRLKNMIFMCGHGTCQLCGDRMSECPICRKAIERRILLYSMSC</sequence>
<keyword id="KW-0040">ANK repeat</keyword>
<keyword id="KW-0175">Coiled coil</keyword>
<keyword id="KW-0963">Cytoplasm</keyword>
<keyword id="KW-0206">Cytoskeleton</keyword>
<keyword id="KW-0479">Metal-binding</keyword>
<keyword id="KW-0914">Notch signaling pathway</keyword>
<keyword id="KW-1185">Reference proteome</keyword>
<keyword id="KW-0677">Repeat</keyword>
<keyword id="KW-0808">Transferase</keyword>
<keyword id="KW-0833">Ubl conjugation pathway</keyword>
<keyword id="KW-0862">Zinc</keyword>
<keyword id="KW-0863">Zinc-finger</keyword>
<proteinExistence type="evidence at transcript level"/>
<accession>Q6GNY1</accession>
<feature type="chain" id="PRO_0000055946" description="E3 ubiquitin-protein ligase mib1">
    <location>
        <begin position="1"/>
        <end position="1011"/>
    </location>
</feature>
<feature type="domain" description="MIB/HERC2 1" evidence="5">
    <location>
        <begin position="6"/>
        <end position="74"/>
    </location>
</feature>
<feature type="domain" description="MIB/HERC2 2" evidence="5">
    <location>
        <begin position="143"/>
        <end position="221"/>
    </location>
</feature>
<feature type="repeat" description="ANK 1">
    <location>
        <begin position="430"/>
        <end position="460"/>
    </location>
</feature>
<feature type="repeat" description="ANK 2">
    <location>
        <begin position="463"/>
        <end position="492"/>
    </location>
</feature>
<feature type="repeat" description="ANK 3">
    <location>
        <begin position="496"/>
        <end position="525"/>
    </location>
</feature>
<feature type="repeat" description="ANK 4">
    <location>
        <begin position="529"/>
        <end position="558"/>
    </location>
</feature>
<feature type="repeat" description="ANK 5">
    <location>
        <begin position="562"/>
        <end position="591"/>
    </location>
</feature>
<feature type="repeat" description="ANK 6">
    <location>
        <begin position="595"/>
        <end position="627"/>
    </location>
</feature>
<feature type="repeat" description="ANK 7">
    <location>
        <begin position="631"/>
        <end position="661"/>
    </location>
</feature>
<feature type="repeat" description="ANK 8">
    <location>
        <begin position="665"/>
        <end position="694"/>
    </location>
</feature>
<feature type="repeat" description="ANK 9">
    <location>
        <begin position="698"/>
        <end position="729"/>
    </location>
</feature>
<feature type="zinc finger region" description="ZZ-type" evidence="4">
    <location>
        <begin position="80"/>
        <end position="132"/>
    </location>
</feature>
<feature type="zinc finger region" description="RING-type 1" evidence="3">
    <location>
        <begin position="820"/>
        <end position="855"/>
    </location>
</feature>
<feature type="zinc finger region" description="RING-type 2" evidence="3">
    <location>
        <begin position="867"/>
        <end position="902"/>
    </location>
</feature>
<feature type="zinc finger region" description="RING-type 3" evidence="3">
    <location>
        <begin position="964"/>
        <end position="997"/>
    </location>
</feature>
<feature type="coiled-coil region" evidence="2">
    <location>
        <begin position="936"/>
        <end position="963"/>
    </location>
</feature>
<feature type="binding site" evidence="4">
    <location>
        <position position="85"/>
    </location>
    <ligand>
        <name>Zn(2+)</name>
        <dbReference type="ChEBI" id="CHEBI:29105"/>
        <label>1</label>
    </ligand>
</feature>
<feature type="binding site" evidence="4">
    <location>
        <position position="88"/>
    </location>
    <ligand>
        <name>Zn(2+)</name>
        <dbReference type="ChEBI" id="CHEBI:29105"/>
        <label>1</label>
    </ligand>
</feature>
<feature type="binding site" evidence="4">
    <location>
        <position position="100"/>
    </location>
    <ligand>
        <name>Zn(2+)</name>
        <dbReference type="ChEBI" id="CHEBI:29105"/>
        <label>2</label>
    </ligand>
</feature>
<feature type="binding site" evidence="4">
    <location>
        <position position="103"/>
    </location>
    <ligand>
        <name>Zn(2+)</name>
        <dbReference type="ChEBI" id="CHEBI:29105"/>
        <label>2</label>
    </ligand>
</feature>
<feature type="binding site" evidence="4">
    <location>
        <position position="109"/>
    </location>
    <ligand>
        <name>Zn(2+)</name>
        <dbReference type="ChEBI" id="CHEBI:29105"/>
        <label>1</label>
    </ligand>
</feature>
<feature type="binding site" evidence="4">
    <location>
        <position position="112"/>
    </location>
    <ligand>
        <name>Zn(2+)</name>
        <dbReference type="ChEBI" id="CHEBI:29105"/>
        <label>1</label>
    </ligand>
</feature>
<feature type="binding site" evidence="4">
    <location>
        <position position="118"/>
    </location>
    <ligand>
        <name>Zn(2+)</name>
        <dbReference type="ChEBI" id="CHEBI:29105"/>
        <label>2</label>
    </ligand>
</feature>
<feature type="binding site" evidence="4">
    <location>
        <position position="122"/>
    </location>
    <ligand>
        <name>Zn(2+)</name>
        <dbReference type="ChEBI" id="CHEBI:29105"/>
        <label>2</label>
    </ligand>
</feature>
<organism>
    <name type="scientific">Xenopus laevis</name>
    <name type="common">African clawed frog</name>
    <dbReference type="NCBI Taxonomy" id="8355"/>
    <lineage>
        <taxon>Eukaryota</taxon>
        <taxon>Metazoa</taxon>
        <taxon>Chordata</taxon>
        <taxon>Craniata</taxon>
        <taxon>Vertebrata</taxon>
        <taxon>Euteleostomi</taxon>
        <taxon>Amphibia</taxon>
        <taxon>Batrachia</taxon>
        <taxon>Anura</taxon>
        <taxon>Pipoidea</taxon>
        <taxon>Pipidae</taxon>
        <taxon>Xenopodinae</taxon>
        <taxon>Xenopus</taxon>
        <taxon>Xenopus</taxon>
    </lineage>
</organism>
<protein>
    <recommendedName>
        <fullName>E3 ubiquitin-protein ligase mib1</fullName>
        <ecNumber>2.3.2.27</ecNumber>
    </recommendedName>
    <alternativeName>
        <fullName>Mind bomb homolog 1</fullName>
    </alternativeName>
    <alternativeName>
        <fullName evidence="6">RING-type E3 ubiquitin transferase mib1</fullName>
    </alternativeName>
</protein>
<name>MIB1_XENLA</name>